<feature type="chain" id="PRO_0000091079" description="Elongation factor G 2">
    <location>
        <begin position="1"/>
        <end position="707"/>
    </location>
</feature>
<feature type="domain" description="tr-type G">
    <location>
        <begin position="8"/>
        <end position="290"/>
    </location>
</feature>
<feature type="binding site" evidence="1">
    <location>
        <begin position="17"/>
        <end position="24"/>
    </location>
    <ligand>
        <name>GTP</name>
        <dbReference type="ChEBI" id="CHEBI:37565"/>
    </ligand>
</feature>
<feature type="binding site" evidence="1">
    <location>
        <begin position="88"/>
        <end position="92"/>
    </location>
    <ligand>
        <name>GTP</name>
        <dbReference type="ChEBI" id="CHEBI:37565"/>
    </ligand>
</feature>
<feature type="binding site" evidence="1">
    <location>
        <begin position="142"/>
        <end position="145"/>
    </location>
    <ligand>
        <name>GTP</name>
        <dbReference type="ChEBI" id="CHEBI:37565"/>
    </ligand>
</feature>
<evidence type="ECO:0000255" key="1">
    <source>
        <dbReference type="HAMAP-Rule" id="MF_00054"/>
    </source>
</evidence>
<protein>
    <recommendedName>
        <fullName evidence="1">Elongation factor G 2</fullName>
        <shortName evidence="1">EF-G 2</shortName>
    </recommendedName>
</protein>
<accession>Q7WFL2</accession>
<sequence>MTRRTSIERYRNIGISAHIDAGKTTTTERILFYTGITHKLGEVHEGAATMDWMEQEQERGITITSAATTAFWRGMAGNYPEHRINIIDTPGHVDFTIEVERSMRVLDGACMVYDSVGGVQPQSETVWRQANKYGVPRIAFVNKMDRVGADFFRVQRQIVERLKGDAVPIQIPVGAEDHFEGVVDLVKMKAIIWDDASQGVRFEYRDIPPELQAQAEQWREKMIEKAAEANEALLEKYLSGQPLSEDEIKSGLRARTVANEIVPMLCGSAFKNKGVQAMLDAVIDYLPSPADVPAIIGHDERDREIERHPADDEPFSALAFKIMTDPFVGQLVFFRVYSGVVKSGDSVLNPLKSKKERLGRILQMHANERREISEVYAGDIAAAVGIKEITTGDTLTDPAHVIILERMTFPEPVISQAVEPRTKADQEKMGIALNRLAQEDPSFRVRTDEESGQTIISGMGELHLEILVDRMKREFGVEANVGKPQVAYRETIRSTVTDVEGKFVKQSGGRGQYGHVVLKLEPQEQGKGYEFVDAIKGGVVPREFIPAVDRGVRETLNTGVLAGYPVVDVKVTLVFGSYHDVDSNENAFRMAASMAFKEGMRRAKPVLLEPMMHVEVETPEDFTGNVMGDLSSRRGMVQGMEDIAGGGGKLVRAEVPLAEMFGYSTSLRSLTQGRATYSMEFKHYAEAPRQVAEQIIAARGSGAAARG</sequence>
<name>EFG2_BORBR</name>
<comment type="function">
    <text evidence="1">Catalyzes the GTP-dependent ribosomal translocation step during translation elongation. During this step, the ribosome changes from the pre-translocational (PRE) to the post-translocational (POST) state as the newly formed A-site-bound peptidyl-tRNA and P-site-bound deacylated tRNA move to the P and E sites, respectively. Catalyzes the coordinated movement of the two tRNA molecules, the mRNA and conformational changes in the ribosome.</text>
</comment>
<comment type="subcellular location">
    <subcellularLocation>
        <location evidence="1">Cytoplasm</location>
    </subcellularLocation>
</comment>
<comment type="similarity">
    <text evidence="1">Belongs to the TRAFAC class translation factor GTPase superfamily. Classic translation factor GTPase family. EF-G/EF-2 subfamily.</text>
</comment>
<dbReference type="EMBL" id="BX640450">
    <property type="protein sequence ID" value="CAE34623.1"/>
    <property type="molecule type" value="Genomic_DNA"/>
</dbReference>
<dbReference type="SMR" id="Q7WFL2"/>
<dbReference type="KEGG" id="bbr:BB4259"/>
<dbReference type="eggNOG" id="COG0480">
    <property type="taxonomic scope" value="Bacteria"/>
</dbReference>
<dbReference type="HOGENOM" id="CLU_002794_4_1_4"/>
<dbReference type="Proteomes" id="UP000001027">
    <property type="component" value="Chromosome"/>
</dbReference>
<dbReference type="GO" id="GO:0005737">
    <property type="term" value="C:cytoplasm"/>
    <property type="evidence" value="ECO:0007669"/>
    <property type="project" value="UniProtKB-SubCell"/>
</dbReference>
<dbReference type="GO" id="GO:0005525">
    <property type="term" value="F:GTP binding"/>
    <property type="evidence" value="ECO:0007669"/>
    <property type="project" value="UniProtKB-UniRule"/>
</dbReference>
<dbReference type="GO" id="GO:0003924">
    <property type="term" value="F:GTPase activity"/>
    <property type="evidence" value="ECO:0007669"/>
    <property type="project" value="InterPro"/>
</dbReference>
<dbReference type="GO" id="GO:0097216">
    <property type="term" value="F:guanosine tetraphosphate binding"/>
    <property type="evidence" value="ECO:0007669"/>
    <property type="project" value="UniProtKB-ARBA"/>
</dbReference>
<dbReference type="GO" id="GO:0003746">
    <property type="term" value="F:translation elongation factor activity"/>
    <property type="evidence" value="ECO:0007669"/>
    <property type="project" value="UniProtKB-UniRule"/>
</dbReference>
<dbReference type="GO" id="GO:0032790">
    <property type="term" value="P:ribosome disassembly"/>
    <property type="evidence" value="ECO:0007669"/>
    <property type="project" value="TreeGrafter"/>
</dbReference>
<dbReference type="CDD" id="cd01886">
    <property type="entry name" value="EF-G"/>
    <property type="match status" value="1"/>
</dbReference>
<dbReference type="CDD" id="cd16262">
    <property type="entry name" value="EFG_III"/>
    <property type="match status" value="1"/>
</dbReference>
<dbReference type="CDD" id="cd01434">
    <property type="entry name" value="EFG_mtEFG1_IV"/>
    <property type="match status" value="1"/>
</dbReference>
<dbReference type="CDD" id="cd03713">
    <property type="entry name" value="EFG_mtEFG_C"/>
    <property type="match status" value="1"/>
</dbReference>
<dbReference type="CDD" id="cd04088">
    <property type="entry name" value="EFG_mtEFG_II"/>
    <property type="match status" value="1"/>
</dbReference>
<dbReference type="FunFam" id="2.40.30.10:FF:000006">
    <property type="entry name" value="Elongation factor G"/>
    <property type="match status" value="1"/>
</dbReference>
<dbReference type="FunFam" id="3.30.230.10:FF:000003">
    <property type="entry name" value="Elongation factor G"/>
    <property type="match status" value="1"/>
</dbReference>
<dbReference type="FunFam" id="3.30.70.240:FF:000001">
    <property type="entry name" value="Elongation factor G"/>
    <property type="match status" value="1"/>
</dbReference>
<dbReference type="FunFam" id="3.30.70.870:FF:000001">
    <property type="entry name" value="Elongation factor G"/>
    <property type="match status" value="1"/>
</dbReference>
<dbReference type="FunFam" id="3.40.50.300:FF:000029">
    <property type="entry name" value="Elongation factor G"/>
    <property type="match status" value="1"/>
</dbReference>
<dbReference type="Gene3D" id="3.30.230.10">
    <property type="match status" value="1"/>
</dbReference>
<dbReference type="Gene3D" id="3.30.70.240">
    <property type="match status" value="1"/>
</dbReference>
<dbReference type="Gene3D" id="3.30.70.870">
    <property type="entry name" value="Elongation Factor G (Translational Gtpase), domain 3"/>
    <property type="match status" value="1"/>
</dbReference>
<dbReference type="Gene3D" id="3.40.50.300">
    <property type="entry name" value="P-loop containing nucleotide triphosphate hydrolases"/>
    <property type="match status" value="1"/>
</dbReference>
<dbReference type="Gene3D" id="2.40.30.10">
    <property type="entry name" value="Translation factors"/>
    <property type="match status" value="1"/>
</dbReference>
<dbReference type="HAMAP" id="MF_00054_B">
    <property type="entry name" value="EF_G_EF_2_B"/>
    <property type="match status" value="1"/>
</dbReference>
<dbReference type="InterPro" id="IPR041095">
    <property type="entry name" value="EFG_II"/>
</dbReference>
<dbReference type="InterPro" id="IPR009022">
    <property type="entry name" value="EFG_III"/>
</dbReference>
<dbReference type="InterPro" id="IPR035647">
    <property type="entry name" value="EFG_III/V"/>
</dbReference>
<dbReference type="InterPro" id="IPR047872">
    <property type="entry name" value="EFG_IV"/>
</dbReference>
<dbReference type="InterPro" id="IPR035649">
    <property type="entry name" value="EFG_V"/>
</dbReference>
<dbReference type="InterPro" id="IPR000640">
    <property type="entry name" value="EFG_V-like"/>
</dbReference>
<dbReference type="InterPro" id="IPR004161">
    <property type="entry name" value="EFTu-like_2"/>
</dbReference>
<dbReference type="InterPro" id="IPR031157">
    <property type="entry name" value="G_TR_CS"/>
</dbReference>
<dbReference type="InterPro" id="IPR027417">
    <property type="entry name" value="P-loop_NTPase"/>
</dbReference>
<dbReference type="InterPro" id="IPR020568">
    <property type="entry name" value="Ribosomal_Su5_D2-typ_SF"/>
</dbReference>
<dbReference type="InterPro" id="IPR014721">
    <property type="entry name" value="Ribsml_uS5_D2-typ_fold_subgr"/>
</dbReference>
<dbReference type="InterPro" id="IPR005225">
    <property type="entry name" value="Small_GTP-bd"/>
</dbReference>
<dbReference type="InterPro" id="IPR000795">
    <property type="entry name" value="T_Tr_GTP-bd_dom"/>
</dbReference>
<dbReference type="InterPro" id="IPR009000">
    <property type="entry name" value="Transl_B-barrel_sf"/>
</dbReference>
<dbReference type="InterPro" id="IPR004540">
    <property type="entry name" value="Transl_elong_EFG/EF2"/>
</dbReference>
<dbReference type="InterPro" id="IPR005517">
    <property type="entry name" value="Transl_elong_EFG/EF2_IV"/>
</dbReference>
<dbReference type="NCBIfam" id="TIGR00484">
    <property type="entry name" value="EF-G"/>
    <property type="match status" value="1"/>
</dbReference>
<dbReference type="NCBIfam" id="NF009379">
    <property type="entry name" value="PRK12740.1-3"/>
    <property type="match status" value="1"/>
</dbReference>
<dbReference type="NCBIfam" id="NF009381">
    <property type="entry name" value="PRK12740.1-5"/>
    <property type="match status" value="1"/>
</dbReference>
<dbReference type="NCBIfam" id="TIGR00231">
    <property type="entry name" value="small_GTP"/>
    <property type="match status" value="1"/>
</dbReference>
<dbReference type="PANTHER" id="PTHR43261:SF1">
    <property type="entry name" value="RIBOSOME-RELEASING FACTOR 2, MITOCHONDRIAL"/>
    <property type="match status" value="1"/>
</dbReference>
<dbReference type="PANTHER" id="PTHR43261">
    <property type="entry name" value="TRANSLATION ELONGATION FACTOR G-RELATED"/>
    <property type="match status" value="1"/>
</dbReference>
<dbReference type="Pfam" id="PF00679">
    <property type="entry name" value="EFG_C"/>
    <property type="match status" value="1"/>
</dbReference>
<dbReference type="Pfam" id="PF14492">
    <property type="entry name" value="EFG_III"/>
    <property type="match status" value="1"/>
</dbReference>
<dbReference type="Pfam" id="PF03764">
    <property type="entry name" value="EFG_IV"/>
    <property type="match status" value="1"/>
</dbReference>
<dbReference type="Pfam" id="PF00009">
    <property type="entry name" value="GTP_EFTU"/>
    <property type="match status" value="1"/>
</dbReference>
<dbReference type="Pfam" id="PF03144">
    <property type="entry name" value="GTP_EFTU_D2"/>
    <property type="match status" value="1"/>
</dbReference>
<dbReference type="PRINTS" id="PR00315">
    <property type="entry name" value="ELONGATNFCT"/>
</dbReference>
<dbReference type="SMART" id="SM00838">
    <property type="entry name" value="EFG_C"/>
    <property type="match status" value="1"/>
</dbReference>
<dbReference type="SMART" id="SM00889">
    <property type="entry name" value="EFG_IV"/>
    <property type="match status" value="1"/>
</dbReference>
<dbReference type="SUPFAM" id="SSF54980">
    <property type="entry name" value="EF-G C-terminal domain-like"/>
    <property type="match status" value="2"/>
</dbReference>
<dbReference type="SUPFAM" id="SSF52540">
    <property type="entry name" value="P-loop containing nucleoside triphosphate hydrolases"/>
    <property type="match status" value="1"/>
</dbReference>
<dbReference type="SUPFAM" id="SSF54211">
    <property type="entry name" value="Ribosomal protein S5 domain 2-like"/>
    <property type="match status" value="1"/>
</dbReference>
<dbReference type="SUPFAM" id="SSF50447">
    <property type="entry name" value="Translation proteins"/>
    <property type="match status" value="1"/>
</dbReference>
<dbReference type="PROSITE" id="PS00301">
    <property type="entry name" value="G_TR_1"/>
    <property type="match status" value="1"/>
</dbReference>
<dbReference type="PROSITE" id="PS51722">
    <property type="entry name" value="G_TR_2"/>
    <property type="match status" value="1"/>
</dbReference>
<organism>
    <name type="scientific">Bordetella bronchiseptica (strain ATCC BAA-588 / NCTC 13252 / RB50)</name>
    <name type="common">Alcaligenes bronchisepticus</name>
    <dbReference type="NCBI Taxonomy" id="257310"/>
    <lineage>
        <taxon>Bacteria</taxon>
        <taxon>Pseudomonadati</taxon>
        <taxon>Pseudomonadota</taxon>
        <taxon>Betaproteobacteria</taxon>
        <taxon>Burkholderiales</taxon>
        <taxon>Alcaligenaceae</taxon>
        <taxon>Bordetella</taxon>
    </lineage>
</organism>
<reference key="1">
    <citation type="journal article" date="2003" name="Nat. Genet.">
        <title>Comparative analysis of the genome sequences of Bordetella pertussis, Bordetella parapertussis and Bordetella bronchiseptica.</title>
        <authorList>
            <person name="Parkhill J."/>
            <person name="Sebaihia M."/>
            <person name="Preston A."/>
            <person name="Murphy L.D."/>
            <person name="Thomson N.R."/>
            <person name="Harris D.E."/>
            <person name="Holden M.T.G."/>
            <person name="Churcher C.M."/>
            <person name="Bentley S.D."/>
            <person name="Mungall K.L."/>
            <person name="Cerdeno-Tarraga A.-M."/>
            <person name="Temple L."/>
            <person name="James K.D."/>
            <person name="Harris B."/>
            <person name="Quail M.A."/>
            <person name="Achtman M."/>
            <person name="Atkin R."/>
            <person name="Baker S."/>
            <person name="Basham D."/>
            <person name="Bason N."/>
            <person name="Cherevach I."/>
            <person name="Chillingworth T."/>
            <person name="Collins M."/>
            <person name="Cronin A."/>
            <person name="Davis P."/>
            <person name="Doggett J."/>
            <person name="Feltwell T."/>
            <person name="Goble A."/>
            <person name="Hamlin N."/>
            <person name="Hauser H."/>
            <person name="Holroyd S."/>
            <person name="Jagels K."/>
            <person name="Leather S."/>
            <person name="Moule S."/>
            <person name="Norberczak H."/>
            <person name="O'Neil S."/>
            <person name="Ormond D."/>
            <person name="Price C."/>
            <person name="Rabbinowitsch E."/>
            <person name="Rutter S."/>
            <person name="Sanders M."/>
            <person name="Saunders D."/>
            <person name="Seeger K."/>
            <person name="Sharp S."/>
            <person name="Simmonds M."/>
            <person name="Skelton J."/>
            <person name="Squares R."/>
            <person name="Squares S."/>
            <person name="Stevens K."/>
            <person name="Unwin L."/>
            <person name="Whitehead S."/>
            <person name="Barrell B.G."/>
            <person name="Maskell D.J."/>
        </authorList>
    </citation>
    <scope>NUCLEOTIDE SEQUENCE [LARGE SCALE GENOMIC DNA]</scope>
    <source>
        <strain>ATCC BAA-588 / NCTC 13252 / RB50</strain>
    </source>
</reference>
<keyword id="KW-0963">Cytoplasm</keyword>
<keyword id="KW-0251">Elongation factor</keyword>
<keyword id="KW-0342">GTP-binding</keyword>
<keyword id="KW-0547">Nucleotide-binding</keyword>
<keyword id="KW-0648">Protein biosynthesis</keyword>
<proteinExistence type="inferred from homology"/>
<gene>
    <name evidence="1" type="primary">fusA2</name>
    <name type="ordered locus">BB4259</name>
</gene>